<feature type="chain" id="PRO_0000310458" description="Single-strand DNA endonuclease ASTE1">
    <location>
        <begin position="1"/>
        <end position="679"/>
    </location>
</feature>
<feature type="region of interest" description="Interaction with SHLD2" evidence="2">
    <location>
        <begin position="351"/>
        <end position="400"/>
    </location>
</feature>
<feature type="region of interest" description="Disordered" evidence="1">
    <location>
        <begin position="625"/>
        <end position="645"/>
    </location>
</feature>
<feature type="compositionally biased region" description="Basic residues" evidence="1">
    <location>
        <begin position="626"/>
        <end position="635"/>
    </location>
</feature>
<feature type="splice variant" id="VSP_056699" description="In isoform 2." evidence="3">
    <original>KEELQEDGAKMLYAE</original>
    <variation>NVDPVPRQAQCLAPR</variation>
    <location>
        <begin position="506"/>
        <end position="520"/>
    </location>
</feature>
<feature type="splice variant" id="VSP_056700" description="In isoform 2." evidence="3">
    <location>
        <begin position="521"/>
        <end position="679"/>
    </location>
</feature>
<feature type="mutagenesis site" description="Loss of single-strand DNA endonuclease activity." evidence="2">
    <original>R</original>
    <variation>A</variation>
    <location>
        <position position="252"/>
    </location>
</feature>
<feature type="sequence conflict" description="In Ref. 5; AAF14876." evidence="4" ref="5">
    <original>Q</original>
    <variation>P</variation>
    <location>
        <position position="303"/>
    </location>
</feature>
<feature type="sequence conflict" description="In Ref. 5; AAF14876." evidence="4" ref="5">
    <original>CGT</original>
    <variation>YGS</variation>
    <location>
        <begin position="312"/>
        <end position="314"/>
    </location>
</feature>
<feature type="sequence conflict" description="In Ref. 5; AAF14876." evidence="4" ref="5">
    <original>P</original>
    <variation>T</variation>
    <location>
        <position position="318"/>
    </location>
</feature>
<feature type="sequence conflict" description="In Ref. 5; AAF14876." evidence="4" ref="5">
    <original>LN</original>
    <variation>SD</variation>
    <location>
        <begin position="321"/>
        <end position="322"/>
    </location>
</feature>
<feature type="sequence conflict" description="In Ref. 5; AAF14876." evidence="4" ref="5">
    <original>V</original>
    <variation>G</variation>
    <location>
        <position position="331"/>
    </location>
</feature>
<feature type="sequence conflict" description="In Ref. 5; AAF14876." evidence="4" ref="5">
    <original>QLS</original>
    <variation>RVP</variation>
    <location>
        <begin position="337"/>
        <end position="339"/>
    </location>
</feature>
<feature type="sequence conflict" description="In Ref. 5; AAF14876." evidence="4" ref="5">
    <original>ILP</original>
    <variation>FLH</variation>
    <location>
        <begin position="352"/>
        <end position="354"/>
    </location>
</feature>
<feature type="sequence conflict" description="In Ref. 5; AAF14876." evidence="4" ref="5">
    <original>Q</original>
    <variation>R</variation>
    <location>
        <position position="362"/>
    </location>
</feature>
<accession>Q2TB18</accession>
<accession>B4DFL9</accession>
<accession>Q3MIB6</accession>
<accession>Q8N6G4</accession>
<accession>Q96JY1</accession>
<accession>Q9UHX6</accession>
<name>ASTE1_HUMAN</name>
<evidence type="ECO:0000256" key="1">
    <source>
        <dbReference type="SAM" id="MobiDB-lite"/>
    </source>
</evidence>
<evidence type="ECO:0000269" key="2">
    <source>
    </source>
</evidence>
<evidence type="ECO:0000303" key="3">
    <source>
    </source>
</evidence>
<evidence type="ECO:0000305" key="4"/>
<dbReference type="EC" id="3.1.-.-"/>
<dbReference type="EMBL" id="AK027806">
    <property type="protein sequence ID" value="BAB55383.1"/>
    <property type="molecule type" value="mRNA"/>
</dbReference>
<dbReference type="EMBL" id="AK294156">
    <property type="protein sequence ID" value="BAG57480.1"/>
    <property type="molecule type" value="mRNA"/>
</dbReference>
<dbReference type="EMBL" id="AC055733">
    <property type="status" value="NOT_ANNOTATED_CDS"/>
    <property type="molecule type" value="Genomic_DNA"/>
</dbReference>
<dbReference type="EMBL" id="CH471052">
    <property type="protein sequence ID" value="EAW79215.1"/>
    <property type="molecule type" value="Genomic_DNA"/>
</dbReference>
<dbReference type="EMBL" id="BC030274">
    <property type="protein sequence ID" value="AAH30274.2"/>
    <property type="status" value="ALT_INIT"/>
    <property type="molecule type" value="mRNA"/>
</dbReference>
<dbReference type="EMBL" id="BC103709">
    <property type="protein sequence ID" value="AAI03710.1"/>
    <property type="status" value="ALT_INIT"/>
    <property type="molecule type" value="mRNA"/>
</dbReference>
<dbReference type="EMBL" id="BC110616">
    <property type="protein sequence ID" value="AAI10617.1"/>
    <property type="molecule type" value="mRNA"/>
</dbReference>
<dbReference type="EMBL" id="AF113539">
    <property type="protein sequence ID" value="AAF14876.1"/>
    <property type="status" value="ALT_FRAME"/>
    <property type="molecule type" value="mRNA"/>
</dbReference>
<dbReference type="CCDS" id="CCDS3068.1">
    <molecule id="Q2TB18-1"/>
</dbReference>
<dbReference type="RefSeq" id="NP_001275879.1">
    <property type="nucleotide sequence ID" value="NM_001288950.1"/>
</dbReference>
<dbReference type="RefSeq" id="NP_054784.2">
    <molecule id="Q2TB18-1"/>
    <property type="nucleotide sequence ID" value="NM_014065.3"/>
</dbReference>
<dbReference type="RefSeq" id="XP_016861755.1">
    <molecule id="Q2TB18-2"/>
    <property type="nucleotide sequence ID" value="XM_017006266.3"/>
</dbReference>
<dbReference type="RefSeq" id="XP_016861756.1">
    <property type="nucleotide sequence ID" value="XM_017006267.1"/>
</dbReference>
<dbReference type="RefSeq" id="XP_016861757.1">
    <property type="nucleotide sequence ID" value="XM_017006268.1"/>
</dbReference>
<dbReference type="RefSeq" id="XP_016861758.1">
    <property type="nucleotide sequence ID" value="XM_017006269.1"/>
</dbReference>
<dbReference type="RefSeq" id="XP_024309254.1">
    <molecule id="Q2TB18-2"/>
    <property type="nucleotide sequence ID" value="XM_024453486.2"/>
</dbReference>
<dbReference type="RefSeq" id="XP_054202338.1">
    <molecule id="Q2TB18-2"/>
    <property type="nucleotide sequence ID" value="XM_054346363.1"/>
</dbReference>
<dbReference type="RefSeq" id="XP_054202339.1">
    <molecule id="Q2TB18-2"/>
    <property type="nucleotide sequence ID" value="XM_054346364.1"/>
</dbReference>
<dbReference type="BioGRID" id="118811">
    <property type="interactions" value="19"/>
</dbReference>
<dbReference type="FunCoup" id="Q2TB18">
    <property type="interactions" value="746"/>
</dbReference>
<dbReference type="IntAct" id="Q2TB18">
    <property type="interactions" value="19"/>
</dbReference>
<dbReference type="STRING" id="9606.ENSP00000426421"/>
<dbReference type="iPTMnet" id="Q2TB18"/>
<dbReference type="PhosphoSitePlus" id="Q2TB18"/>
<dbReference type="BioMuta" id="ASTE1"/>
<dbReference type="DMDM" id="121941802"/>
<dbReference type="jPOST" id="Q2TB18"/>
<dbReference type="MassIVE" id="Q2TB18"/>
<dbReference type="PaxDb" id="9606-ENSP00000426421"/>
<dbReference type="PeptideAtlas" id="Q2TB18"/>
<dbReference type="ProteomicsDB" id="4057"/>
<dbReference type="ProteomicsDB" id="61480">
    <molecule id="Q2TB18-1"/>
</dbReference>
<dbReference type="Pumba" id="Q2TB18"/>
<dbReference type="Antibodypedia" id="33340">
    <property type="antibodies" value="123 antibodies from 18 providers"/>
</dbReference>
<dbReference type="DNASU" id="28990"/>
<dbReference type="Ensembl" id="ENST00000264992.8">
    <molecule id="Q2TB18-1"/>
    <property type="protein sequence ID" value="ENSP00000264992.3"/>
    <property type="gene ID" value="ENSG00000034533.12"/>
</dbReference>
<dbReference type="Ensembl" id="ENST00000507978.5">
    <molecule id="Q2TB18-2"/>
    <property type="protein sequence ID" value="ENSP00000421019.1"/>
    <property type="gene ID" value="ENSG00000034533.12"/>
</dbReference>
<dbReference type="GeneID" id="28990"/>
<dbReference type="KEGG" id="hsa:28990"/>
<dbReference type="MANE-Select" id="ENST00000264992.8">
    <property type="protein sequence ID" value="ENSP00000264992.3"/>
    <property type="RefSeq nucleotide sequence ID" value="NM_014065.4"/>
    <property type="RefSeq protein sequence ID" value="NP_054784.2"/>
</dbReference>
<dbReference type="UCSC" id="uc003env.3">
    <molecule id="Q2TB18-1"/>
    <property type="organism name" value="human"/>
</dbReference>
<dbReference type="AGR" id="HGNC:25021"/>
<dbReference type="CTD" id="28990"/>
<dbReference type="DisGeNET" id="28990"/>
<dbReference type="GeneCards" id="ASTE1"/>
<dbReference type="HGNC" id="HGNC:25021">
    <property type="gene designation" value="ASTE1"/>
</dbReference>
<dbReference type="HPA" id="ENSG00000034533">
    <property type="expression patterns" value="Low tissue specificity"/>
</dbReference>
<dbReference type="MIM" id="620693">
    <property type="type" value="gene"/>
</dbReference>
<dbReference type="neXtProt" id="NX_Q2TB18"/>
<dbReference type="OpenTargets" id="ENSG00000034533"/>
<dbReference type="PharmGKB" id="PA142672577"/>
<dbReference type="VEuPathDB" id="HostDB:ENSG00000034533"/>
<dbReference type="eggNOG" id="ENOG502QQRA">
    <property type="taxonomic scope" value="Eukaryota"/>
</dbReference>
<dbReference type="GeneTree" id="ENSGT00390000010145"/>
<dbReference type="HOGENOM" id="CLU_017330_1_0_1"/>
<dbReference type="InParanoid" id="Q2TB18"/>
<dbReference type="OMA" id="DARCWYE"/>
<dbReference type="OrthoDB" id="25987at2759"/>
<dbReference type="PAN-GO" id="Q2TB18">
    <property type="GO annotations" value="0 GO annotations based on evolutionary models"/>
</dbReference>
<dbReference type="PhylomeDB" id="Q2TB18"/>
<dbReference type="TreeFam" id="TF324582"/>
<dbReference type="PathwayCommons" id="Q2TB18"/>
<dbReference type="SignaLink" id="Q2TB18"/>
<dbReference type="BioGRID-ORCS" id="28990">
    <property type="hits" value="10 hits in 1158 CRISPR screens"/>
</dbReference>
<dbReference type="GenomeRNAi" id="28990"/>
<dbReference type="Pharos" id="Q2TB18">
    <property type="development level" value="Tbio"/>
</dbReference>
<dbReference type="PRO" id="PR:Q2TB18"/>
<dbReference type="Proteomes" id="UP000005640">
    <property type="component" value="Chromosome 3"/>
</dbReference>
<dbReference type="RNAct" id="Q2TB18">
    <property type="molecule type" value="protein"/>
</dbReference>
<dbReference type="Bgee" id="ENSG00000034533">
    <property type="expression patterns" value="Expressed in sperm and 153 other cell types or tissues"/>
</dbReference>
<dbReference type="ExpressionAtlas" id="Q2TB18">
    <property type="expression patterns" value="baseline and differential"/>
</dbReference>
<dbReference type="GO" id="GO:1990599">
    <property type="term" value="F:3' overhang single-stranded DNA endodeoxyribonuclease activity"/>
    <property type="evidence" value="ECO:0000314"/>
    <property type="project" value="UniProtKB"/>
</dbReference>
<dbReference type="GO" id="GO:0000014">
    <property type="term" value="F:single-stranded DNA endodeoxyribonuclease activity"/>
    <property type="evidence" value="ECO:0000314"/>
    <property type="project" value="UniProtKB"/>
</dbReference>
<dbReference type="GO" id="GO:0000724">
    <property type="term" value="P:double-strand break repair via homologous recombination"/>
    <property type="evidence" value="ECO:0000315"/>
    <property type="project" value="UniProtKB"/>
</dbReference>
<dbReference type="GO" id="GO:0006303">
    <property type="term" value="P:double-strand break repair via nonhomologous end joining"/>
    <property type="evidence" value="ECO:0000315"/>
    <property type="project" value="UniProtKB"/>
</dbReference>
<dbReference type="Gene3D" id="3.40.50.1010">
    <property type="entry name" value="5'-nuclease"/>
    <property type="match status" value="1"/>
</dbReference>
<dbReference type="InterPro" id="IPR026832">
    <property type="entry name" value="Asteroid"/>
</dbReference>
<dbReference type="InterPro" id="IPR029060">
    <property type="entry name" value="PIN-like_dom_sf"/>
</dbReference>
<dbReference type="InterPro" id="IPR006085">
    <property type="entry name" value="XPG_DNA_repair_N"/>
</dbReference>
<dbReference type="PANTHER" id="PTHR15665">
    <property type="entry name" value="ASTEROID PROTEIN"/>
    <property type="match status" value="1"/>
</dbReference>
<dbReference type="PANTHER" id="PTHR15665:SF1">
    <property type="entry name" value="PROTEIN ASTEROID HOMOLOG 1"/>
    <property type="match status" value="1"/>
</dbReference>
<dbReference type="Pfam" id="PF00752">
    <property type="entry name" value="XPG_N"/>
    <property type="match status" value="1"/>
</dbReference>
<dbReference type="SUPFAM" id="SSF88723">
    <property type="entry name" value="PIN domain-like"/>
    <property type="match status" value="1"/>
</dbReference>
<gene>
    <name type="primary">ASTE1</name>
    <name type="ORF">HT001</name>
</gene>
<reference key="1">
    <citation type="journal article" date="2004" name="Nat. Genet.">
        <title>Complete sequencing and characterization of 21,243 full-length human cDNAs.</title>
        <authorList>
            <person name="Ota T."/>
            <person name="Suzuki Y."/>
            <person name="Nishikawa T."/>
            <person name="Otsuki T."/>
            <person name="Sugiyama T."/>
            <person name="Irie R."/>
            <person name="Wakamatsu A."/>
            <person name="Hayashi K."/>
            <person name="Sato H."/>
            <person name="Nagai K."/>
            <person name="Kimura K."/>
            <person name="Makita H."/>
            <person name="Sekine M."/>
            <person name="Obayashi M."/>
            <person name="Nishi T."/>
            <person name="Shibahara T."/>
            <person name="Tanaka T."/>
            <person name="Ishii S."/>
            <person name="Yamamoto J."/>
            <person name="Saito K."/>
            <person name="Kawai Y."/>
            <person name="Isono Y."/>
            <person name="Nakamura Y."/>
            <person name="Nagahari K."/>
            <person name="Murakami K."/>
            <person name="Yasuda T."/>
            <person name="Iwayanagi T."/>
            <person name="Wagatsuma M."/>
            <person name="Shiratori A."/>
            <person name="Sudo H."/>
            <person name="Hosoiri T."/>
            <person name="Kaku Y."/>
            <person name="Kodaira H."/>
            <person name="Kondo H."/>
            <person name="Sugawara M."/>
            <person name="Takahashi M."/>
            <person name="Kanda K."/>
            <person name="Yokoi T."/>
            <person name="Furuya T."/>
            <person name="Kikkawa E."/>
            <person name="Omura Y."/>
            <person name="Abe K."/>
            <person name="Kamihara K."/>
            <person name="Katsuta N."/>
            <person name="Sato K."/>
            <person name="Tanikawa M."/>
            <person name="Yamazaki M."/>
            <person name="Ninomiya K."/>
            <person name="Ishibashi T."/>
            <person name="Yamashita H."/>
            <person name="Murakawa K."/>
            <person name="Fujimori K."/>
            <person name="Tanai H."/>
            <person name="Kimata M."/>
            <person name="Watanabe M."/>
            <person name="Hiraoka S."/>
            <person name="Chiba Y."/>
            <person name="Ishida S."/>
            <person name="Ono Y."/>
            <person name="Takiguchi S."/>
            <person name="Watanabe S."/>
            <person name="Yosida M."/>
            <person name="Hotuta T."/>
            <person name="Kusano J."/>
            <person name="Kanehori K."/>
            <person name="Takahashi-Fujii A."/>
            <person name="Hara H."/>
            <person name="Tanase T.-O."/>
            <person name="Nomura Y."/>
            <person name="Togiya S."/>
            <person name="Komai F."/>
            <person name="Hara R."/>
            <person name="Takeuchi K."/>
            <person name="Arita M."/>
            <person name="Imose N."/>
            <person name="Musashino K."/>
            <person name="Yuuki H."/>
            <person name="Oshima A."/>
            <person name="Sasaki N."/>
            <person name="Aotsuka S."/>
            <person name="Yoshikawa Y."/>
            <person name="Matsunawa H."/>
            <person name="Ichihara T."/>
            <person name="Shiohata N."/>
            <person name="Sano S."/>
            <person name="Moriya S."/>
            <person name="Momiyama H."/>
            <person name="Satoh N."/>
            <person name="Takami S."/>
            <person name="Terashima Y."/>
            <person name="Suzuki O."/>
            <person name="Nakagawa S."/>
            <person name="Senoh A."/>
            <person name="Mizoguchi H."/>
            <person name="Goto Y."/>
            <person name="Shimizu F."/>
            <person name="Wakebe H."/>
            <person name="Hishigaki H."/>
            <person name="Watanabe T."/>
            <person name="Sugiyama A."/>
            <person name="Takemoto M."/>
            <person name="Kawakami B."/>
            <person name="Yamazaki M."/>
            <person name="Watanabe K."/>
            <person name="Kumagai A."/>
            <person name="Itakura S."/>
            <person name="Fukuzumi Y."/>
            <person name="Fujimori Y."/>
            <person name="Komiyama M."/>
            <person name="Tashiro H."/>
            <person name="Tanigami A."/>
            <person name="Fujiwara T."/>
            <person name="Ono T."/>
            <person name="Yamada K."/>
            <person name="Fujii Y."/>
            <person name="Ozaki K."/>
            <person name="Hirao M."/>
            <person name="Ohmori Y."/>
            <person name="Kawabata A."/>
            <person name="Hikiji T."/>
            <person name="Kobatake N."/>
            <person name="Inagaki H."/>
            <person name="Ikema Y."/>
            <person name="Okamoto S."/>
            <person name="Okitani R."/>
            <person name="Kawakami T."/>
            <person name="Noguchi S."/>
            <person name="Itoh T."/>
            <person name="Shigeta K."/>
            <person name="Senba T."/>
            <person name="Matsumura K."/>
            <person name="Nakajima Y."/>
            <person name="Mizuno T."/>
            <person name="Morinaga M."/>
            <person name="Sasaki M."/>
            <person name="Togashi T."/>
            <person name="Oyama M."/>
            <person name="Hata H."/>
            <person name="Watanabe M."/>
            <person name="Komatsu T."/>
            <person name="Mizushima-Sugano J."/>
            <person name="Satoh T."/>
            <person name="Shirai Y."/>
            <person name="Takahashi Y."/>
            <person name="Nakagawa K."/>
            <person name="Okumura K."/>
            <person name="Nagase T."/>
            <person name="Nomura N."/>
            <person name="Kikuchi H."/>
            <person name="Masuho Y."/>
            <person name="Yamashita R."/>
            <person name="Nakai K."/>
            <person name="Yada T."/>
            <person name="Nakamura Y."/>
            <person name="Ohara O."/>
            <person name="Isogai T."/>
            <person name="Sugano S."/>
        </authorList>
    </citation>
    <scope>NUCLEOTIDE SEQUENCE [LARGE SCALE MRNA] (ISOFORM 2)</scope>
    <scope>NUCLEOTIDE SEQUENCE [LARGE SCALE MRNA] OF 1-626 (ISOFORM 1)</scope>
    <source>
        <tissue>Brain cortex</tissue>
        <tissue>Placenta</tissue>
    </source>
</reference>
<reference key="2">
    <citation type="journal article" date="2006" name="Nature">
        <title>The DNA sequence, annotation and analysis of human chromosome 3.</title>
        <authorList>
            <person name="Muzny D.M."/>
            <person name="Scherer S.E."/>
            <person name="Kaul R."/>
            <person name="Wang J."/>
            <person name="Yu J."/>
            <person name="Sudbrak R."/>
            <person name="Buhay C.J."/>
            <person name="Chen R."/>
            <person name="Cree A."/>
            <person name="Ding Y."/>
            <person name="Dugan-Rocha S."/>
            <person name="Gill R."/>
            <person name="Gunaratne P."/>
            <person name="Harris R.A."/>
            <person name="Hawes A.C."/>
            <person name="Hernandez J."/>
            <person name="Hodgson A.V."/>
            <person name="Hume J."/>
            <person name="Jackson A."/>
            <person name="Khan Z.M."/>
            <person name="Kovar-Smith C."/>
            <person name="Lewis L.R."/>
            <person name="Lozado R.J."/>
            <person name="Metzker M.L."/>
            <person name="Milosavljevic A."/>
            <person name="Miner G.R."/>
            <person name="Morgan M.B."/>
            <person name="Nazareth L.V."/>
            <person name="Scott G."/>
            <person name="Sodergren E."/>
            <person name="Song X.-Z."/>
            <person name="Steffen D."/>
            <person name="Wei S."/>
            <person name="Wheeler D.A."/>
            <person name="Wright M.W."/>
            <person name="Worley K.C."/>
            <person name="Yuan Y."/>
            <person name="Zhang Z."/>
            <person name="Adams C.Q."/>
            <person name="Ansari-Lari M.A."/>
            <person name="Ayele M."/>
            <person name="Brown M.J."/>
            <person name="Chen G."/>
            <person name="Chen Z."/>
            <person name="Clendenning J."/>
            <person name="Clerc-Blankenburg K.P."/>
            <person name="Chen R."/>
            <person name="Chen Z."/>
            <person name="Davis C."/>
            <person name="Delgado O."/>
            <person name="Dinh H.H."/>
            <person name="Dong W."/>
            <person name="Draper H."/>
            <person name="Ernst S."/>
            <person name="Fu G."/>
            <person name="Gonzalez-Garay M.L."/>
            <person name="Garcia D.K."/>
            <person name="Gillett W."/>
            <person name="Gu J."/>
            <person name="Hao B."/>
            <person name="Haugen E."/>
            <person name="Havlak P."/>
            <person name="He X."/>
            <person name="Hennig S."/>
            <person name="Hu S."/>
            <person name="Huang W."/>
            <person name="Jackson L.R."/>
            <person name="Jacob L.S."/>
            <person name="Kelly S.H."/>
            <person name="Kube M."/>
            <person name="Levy R."/>
            <person name="Li Z."/>
            <person name="Liu B."/>
            <person name="Liu J."/>
            <person name="Liu W."/>
            <person name="Lu J."/>
            <person name="Maheshwari M."/>
            <person name="Nguyen B.-V."/>
            <person name="Okwuonu G.O."/>
            <person name="Palmeiri A."/>
            <person name="Pasternak S."/>
            <person name="Perez L.M."/>
            <person name="Phelps K.A."/>
            <person name="Plopper F.J."/>
            <person name="Qiang B."/>
            <person name="Raymond C."/>
            <person name="Rodriguez R."/>
            <person name="Saenphimmachak C."/>
            <person name="Santibanez J."/>
            <person name="Shen H."/>
            <person name="Shen Y."/>
            <person name="Subramanian S."/>
            <person name="Tabor P.E."/>
            <person name="Verduzco D."/>
            <person name="Waldron L."/>
            <person name="Wang J."/>
            <person name="Wang J."/>
            <person name="Wang Q."/>
            <person name="Williams G.A."/>
            <person name="Wong G.K.-S."/>
            <person name="Yao Z."/>
            <person name="Zhang J."/>
            <person name="Zhang X."/>
            <person name="Zhao G."/>
            <person name="Zhou J."/>
            <person name="Zhou Y."/>
            <person name="Nelson D."/>
            <person name="Lehrach H."/>
            <person name="Reinhardt R."/>
            <person name="Naylor S.L."/>
            <person name="Yang H."/>
            <person name="Olson M."/>
            <person name="Weinstock G."/>
            <person name="Gibbs R.A."/>
        </authorList>
    </citation>
    <scope>NUCLEOTIDE SEQUENCE [LARGE SCALE GENOMIC DNA]</scope>
</reference>
<reference key="3">
    <citation type="submission" date="2005-07" db="EMBL/GenBank/DDBJ databases">
        <authorList>
            <person name="Mural R.J."/>
            <person name="Istrail S."/>
            <person name="Sutton G.G."/>
            <person name="Florea L."/>
            <person name="Halpern A.L."/>
            <person name="Mobarry C.M."/>
            <person name="Lippert R."/>
            <person name="Walenz B."/>
            <person name="Shatkay H."/>
            <person name="Dew I."/>
            <person name="Miller J.R."/>
            <person name="Flanigan M.J."/>
            <person name="Edwards N.J."/>
            <person name="Bolanos R."/>
            <person name="Fasulo D."/>
            <person name="Halldorsson B.V."/>
            <person name="Hannenhalli S."/>
            <person name="Turner R."/>
            <person name="Yooseph S."/>
            <person name="Lu F."/>
            <person name="Nusskern D.R."/>
            <person name="Shue B.C."/>
            <person name="Zheng X.H."/>
            <person name="Zhong F."/>
            <person name="Delcher A.L."/>
            <person name="Huson D.H."/>
            <person name="Kravitz S.A."/>
            <person name="Mouchard L."/>
            <person name="Reinert K."/>
            <person name="Remington K.A."/>
            <person name="Clark A.G."/>
            <person name="Waterman M.S."/>
            <person name="Eichler E.E."/>
            <person name="Adams M.D."/>
            <person name="Hunkapiller M.W."/>
            <person name="Myers E.W."/>
            <person name="Venter J.C."/>
        </authorList>
    </citation>
    <scope>NUCLEOTIDE SEQUENCE [LARGE SCALE GENOMIC DNA]</scope>
</reference>
<reference key="4">
    <citation type="journal article" date="2004" name="Genome Res.">
        <title>The status, quality, and expansion of the NIH full-length cDNA project: the Mammalian Gene Collection (MGC).</title>
        <authorList>
            <consortium name="The MGC Project Team"/>
        </authorList>
    </citation>
    <scope>NUCLEOTIDE SEQUENCE [LARGE SCALE MRNA] (ISOFORM 1)</scope>
    <source>
        <tissue>Lung</tissue>
        <tissue>Skin</tissue>
    </source>
</reference>
<reference key="5">
    <citation type="journal article" date="2000" name="Proc. Natl. Acad. Sci. U.S.A.">
        <title>Gene expression profiling in the human hypothalamus-pituitary-adrenal axis and full-length cDNA cloning.</title>
        <authorList>
            <person name="Hu R.-M."/>
            <person name="Han Z.-G."/>
            <person name="Song H.-D."/>
            <person name="Peng Y.-D."/>
            <person name="Huang Q.-H."/>
            <person name="Ren S.-X."/>
            <person name="Gu Y.-J."/>
            <person name="Huang C.-H."/>
            <person name="Li Y.-B."/>
            <person name="Jiang C.-L."/>
            <person name="Fu G."/>
            <person name="Zhang Q.-H."/>
            <person name="Gu B.-W."/>
            <person name="Dai M."/>
            <person name="Mao Y.-F."/>
            <person name="Gao G.-F."/>
            <person name="Rong R."/>
            <person name="Ye M."/>
            <person name="Zhou J."/>
            <person name="Xu S.-H."/>
            <person name="Gu J."/>
            <person name="Shi J.-X."/>
            <person name="Jin W.-R."/>
            <person name="Zhang C.-K."/>
            <person name="Wu T.-M."/>
            <person name="Huang G.-Y."/>
            <person name="Chen Z."/>
            <person name="Chen M.-D."/>
            <person name="Chen J.-L."/>
        </authorList>
    </citation>
    <scope>NUCLEOTIDE SEQUENCE [LARGE SCALE MRNA] OF 285-679 (ISOFORM 1)</scope>
    <source>
        <tissue>Hypothalamus</tissue>
    </source>
</reference>
<reference key="6">
    <citation type="journal article" date="2021" name="Nat. Cell Biol.">
        <title>ASTE1 promotes shieldin-complex-mediated DNA repair by attenuating end resection.</title>
        <authorList>
            <person name="Zhao F."/>
            <person name="Kim W."/>
            <person name="Gao H."/>
            <person name="Liu C."/>
            <person name="Zhang Y."/>
            <person name="Chen Y."/>
            <person name="Deng M."/>
            <person name="Zhou Q."/>
            <person name="Huang J."/>
            <person name="Hu Q."/>
            <person name="Chen S.H."/>
            <person name="Nowsheen S."/>
            <person name="Kloeber J.A."/>
            <person name="Qin B."/>
            <person name="Yin P."/>
            <person name="Tu X."/>
            <person name="Guo G."/>
            <person name="Qin S."/>
            <person name="Zhang C."/>
            <person name="Gao M."/>
            <person name="Luo K."/>
            <person name="Liu Y."/>
            <person name="Lou Z."/>
            <person name="Yuan J."/>
        </authorList>
    </citation>
    <scope>FUNCTION</scope>
    <scope>MUTAGENESIS OF ARG-252</scope>
    <scope>INTERACTION WITH SHLD1; SHLD2; SHLD3; RIF1 AND MAD2L2</scope>
</reference>
<keyword id="KW-0025">Alternative splicing</keyword>
<keyword id="KW-0378">Hydrolase</keyword>
<keyword id="KW-1267">Proteomics identification</keyword>
<keyword id="KW-1185">Reference proteome</keyword>
<protein>
    <recommendedName>
        <fullName>Single-strand DNA endonuclease ASTE1</fullName>
        <ecNumber>3.1.-.-</ecNumber>
    </recommendedName>
    <alternativeName>
        <fullName>Protein asteroid homolog 1</fullName>
    </alternativeName>
</protein>
<proteinExistence type="evidence at protein level"/>
<sequence length="679" mass="77093">MGIRGLMSFVEDHSNEFFTDLKLRDTKIVIDGYALFHRLCFSSNLDLRYGGDYDSFADVVQKFFESLFACNICPYVVLDGGCDISDKKLTTLKDRAREKIQMAHSLSVGGSGYVCPLLIREVFIQVLIKLRVCFVQCFSEADRDIMTLANHWNCPVLSSDSDFCIFDLKTGFCPLNSFQWRNMNTIKGTQNYIPAKCFSLDAFCHHFSNMNKALLPLFAVLCGNDHVNLPIMETFLSKARLPLGATSSKGRRHHRILGLLNWLSHFANPTEALDNVLKYLPKKDRENVKELLCCSMEEYQQSQVKLQDFFQCGTYVCPDALNLGLPEWVLVALAKGQLSPFISDALVLRRTILPTQVENMQQPNAHRISQPIRQIIYGLLLNASPHLDKTSWNALPPQPLAFSEVERINKNIRTSIIDAVELAKDHSDLSRLTELSLRRRQMLLLETLKVKQTILEPIPTSLKLPIAVSCYWLQHTETKAKLHHLQSLLLTMLVGPLIAIINSPGKEELQEDGAKMLYAEFQRVKAQTRLGTRLDLDTAHIFCQWQSCLQMGMYLNQLLSTPLPEPDLTRLYSGSLVHGLCQQLLASTSVESLLSICPEAKQLYEYLFNATRSYAPAEIFLPKGRSNSKKKRQKKQNTSCSKNRGRTTAHTKCWYEGNNRFGLLMVENLEEHSEASNIE</sequence>
<comment type="function">
    <text evidence="2">Structure-specific DNA endonuclease that specifically cleaves single-stranded DNA and 3' overhang DNA. Contributes to the control of DNA double-strand break repair choice by antagonizing BRCA1-dependent homologous recombination (HR) and promoting non-homologous end-joining (NHEJ). Recruited to the single-stranded DNA ends by SHLD2 and cleaves the 3' exposed DNA ends, therefore inhibiting DNA end resection (necessary for HR) and promoting DNA end protection (necessary for NHEJ).</text>
</comment>
<comment type="subunit">
    <text evidence="2">Interacts with SHLD1, SHLD2, SHLD3, RIF1 and MAD2L2/REV7.</text>
</comment>
<comment type="interaction">
    <interactant intactId="EBI-2875586">
        <id>Q2TB18</id>
    </interactant>
    <interactant intactId="EBI-717592">
        <id>Q13426</id>
        <label>XRCC4</label>
    </interactant>
    <organismsDiffer>false</organismsDiffer>
    <experiments>3</experiments>
</comment>
<comment type="alternative products">
    <event type="alternative splicing"/>
    <isoform>
        <id>Q2TB18-1</id>
        <name>1</name>
        <sequence type="displayed"/>
    </isoform>
    <isoform>
        <id>Q2TB18-2</id>
        <name>2</name>
        <sequence type="described" ref="VSP_056699 VSP_056700"/>
    </isoform>
</comment>
<comment type="similarity">
    <text evidence="4">Belongs to the asteroid family.</text>
</comment>
<comment type="sequence caution" evidence="4">
    <conflict type="frameshift">
        <sequence resource="EMBL-CDS" id="AAF14876"/>
    </conflict>
</comment>
<comment type="sequence caution" evidence="4">
    <conflict type="erroneous initiation">
        <sequence resource="EMBL-CDS" id="AAH30274"/>
    </conflict>
    <text>Extended N-terminus.</text>
</comment>
<comment type="sequence caution" evidence="4">
    <conflict type="erroneous initiation">
        <sequence resource="EMBL-CDS" id="AAI03710"/>
    </conflict>
    <text>Extended N-terminus.</text>
</comment>
<organism>
    <name type="scientific">Homo sapiens</name>
    <name type="common">Human</name>
    <dbReference type="NCBI Taxonomy" id="9606"/>
    <lineage>
        <taxon>Eukaryota</taxon>
        <taxon>Metazoa</taxon>
        <taxon>Chordata</taxon>
        <taxon>Craniata</taxon>
        <taxon>Vertebrata</taxon>
        <taxon>Euteleostomi</taxon>
        <taxon>Mammalia</taxon>
        <taxon>Eutheria</taxon>
        <taxon>Euarchontoglires</taxon>
        <taxon>Primates</taxon>
        <taxon>Haplorrhini</taxon>
        <taxon>Catarrhini</taxon>
        <taxon>Hominidae</taxon>
        <taxon>Homo</taxon>
    </lineage>
</organism>